<protein>
    <recommendedName>
        <fullName evidence="1">Putative pterin-4-alpha-carbinolamine dehydratase</fullName>
        <shortName evidence="1">PHS</shortName>
        <ecNumber evidence="1">4.2.1.96</ecNumber>
    </recommendedName>
    <alternativeName>
        <fullName evidence="1">4-alpha-hydroxy-tetrahydropterin dehydratase</fullName>
    </alternativeName>
    <alternativeName>
        <fullName evidence="1">Pterin carbinolamine dehydratase</fullName>
        <shortName evidence="1">PCD</shortName>
    </alternativeName>
</protein>
<keyword id="KW-0456">Lyase</keyword>
<comment type="catalytic activity">
    <reaction evidence="1">
        <text>(4aS,6R)-4a-hydroxy-L-erythro-5,6,7,8-tetrahydrobiopterin = (6R)-L-erythro-6,7-dihydrobiopterin + H2O</text>
        <dbReference type="Rhea" id="RHEA:11920"/>
        <dbReference type="ChEBI" id="CHEBI:15377"/>
        <dbReference type="ChEBI" id="CHEBI:15642"/>
        <dbReference type="ChEBI" id="CHEBI:43120"/>
        <dbReference type="EC" id="4.2.1.96"/>
    </reaction>
</comment>
<comment type="similarity">
    <text evidence="1">Belongs to the pterin-4-alpha-carbinolamine dehydratase family.</text>
</comment>
<evidence type="ECO:0000255" key="1">
    <source>
        <dbReference type="HAMAP-Rule" id="MF_00434"/>
    </source>
</evidence>
<feature type="chain" id="PRO_1000050437" description="Putative pterin-4-alpha-carbinolamine dehydratase">
    <location>
        <begin position="1"/>
        <end position="118"/>
    </location>
</feature>
<sequence>MNALNQAHCEACRADAPKVSDDELAELILQIPDWNIEVRDGHMELERVFLFKNFKHALAFTNAIGEIAEAEGHHPGLLTEWGKVTVTWWSHSIKGLHRNDFIMCARTDEVAKTAEGRK</sequence>
<name>PHS_PSEE4</name>
<dbReference type="EC" id="4.2.1.96" evidence="1"/>
<dbReference type="EMBL" id="CT573326">
    <property type="protein sequence ID" value="CAK16600.1"/>
    <property type="molecule type" value="Genomic_DNA"/>
</dbReference>
<dbReference type="RefSeq" id="WP_011534975.1">
    <property type="nucleotide sequence ID" value="NC_008027.1"/>
</dbReference>
<dbReference type="SMR" id="Q1I6Y2"/>
<dbReference type="STRING" id="384676.PSEEN3893"/>
<dbReference type="GeneID" id="32806930"/>
<dbReference type="KEGG" id="pen:PSEEN3893"/>
<dbReference type="eggNOG" id="COG2154">
    <property type="taxonomic scope" value="Bacteria"/>
</dbReference>
<dbReference type="HOGENOM" id="CLU_081974_2_2_6"/>
<dbReference type="OrthoDB" id="5294615at2"/>
<dbReference type="Proteomes" id="UP000000658">
    <property type="component" value="Chromosome"/>
</dbReference>
<dbReference type="GO" id="GO:0008124">
    <property type="term" value="F:4-alpha-hydroxytetrahydrobiopterin dehydratase activity"/>
    <property type="evidence" value="ECO:0007669"/>
    <property type="project" value="UniProtKB-UniRule"/>
</dbReference>
<dbReference type="GO" id="GO:0006729">
    <property type="term" value="P:tetrahydrobiopterin biosynthetic process"/>
    <property type="evidence" value="ECO:0007669"/>
    <property type="project" value="InterPro"/>
</dbReference>
<dbReference type="CDD" id="cd00913">
    <property type="entry name" value="PCD_DCoH_subfamily_a"/>
    <property type="match status" value="1"/>
</dbReference>
<dbReference type="Gene3D" id="3.30.1360.20">
    <property type="entry name" value="Transcriptional coactivator/pterin dehydratase"/>
    <property type="match status" value="1"/>
</dbReference>
<dbReference type="HAMAP" id="MF_00434">
    <property type="entry name" value="Pterin_4_alpha"/>
    <property type="match status" value="1"/>
</dbReference>
<dbReference type="InterPro" id="IPR036428">
    <property type="entry name" value="PCD_sf"/>
</dbReference>
<dbReference type="InterPro" id="IPR050376">
    <property type="entry name" value="Pterin-4-alpha-carb_dehyd"/>
</dbReference>
<dbReference type="InterPro" id="IPR001533">
    <property type="entry name" value="Pterin_deHydtase"/>
</dbReference>
<dbReference type="NCBIfam" id="NF002016">
    <property type="entry name" value="PRK00823.1-1"/>
    <property type="match status" value="1"/>
</dbReference>
<dbReference type="PANTHER" id="PTHR42805">
    <property type="entry name" value="PTERIN-4-ALPHA-CARBINOLAMINE DEHYDRATASE-RELATED"/>
    <property type="match status" value="1"/>
</dbReference>
<dbReference type="PANTHER" id="PTHR42805:SF1">
    <property type="entry name" value="PTERIN-4-ALPHA-CARBINOLAMINE DEHYDRATASE-RELATED"/>
    <property type="match status" value="1"/>
</dbReference>
<dbReference type="Pfam" id="PF01329">
    <property type="entry name" value="Pterin_4a"/>
    <property type="match status" value="1"/>
</dbReference>
<dbReference type="SUPFAM" id="SSF55248">
    <property type="entry name" value="PCD-like"/>
    <property type="match status" value="1"/>
</dbReference>
<proteinExistence type="inferred from homology"/>
<gene>
    <name type="ordered locus">PSEEN3893</name>
</gene>
<accession>Q1I6Y2</accession>
<reference key="1">
    <citation type="journal article" date="2006" name="Nat. Biotechnol.">
        <title>Complete genome sequence of the entomopathogenic and metabolically versatile soil bacterium Pseudomonas entomophila.</title>
        <authorList>
            <person name="Vodovar N."/>
            <person name="Vallenet D."/>
            <person name="Cruveiller S."/>
            <person name="Rouy Z."/>
            <person name="Barbe V."/>
            <person name="Acosta C."/>
            <person name="Cattolico L."/>
            <person name="Jubin C."/>
            <person name="Lajus A."/>
            <person name="Segurens B."/>
            <person name="Vacherie B."/>
            <person name="Wincker P."/>
            <person name="Weissenbach J."/>
            <person name="Lemaitre B."/>
            <person name="Medigue C."/>
            <person name="Boccard F."/>
        </authorList>
    </citation>
    <scope>NUCLEOTIDE SEQUENCE [LARGE SCALE GENOMIC DNA]</scope>
    <source>
        <strain>L48</strain>
    </source>
</reference>
<organism>
    <name type="scientific">Pseudomonas entomophila (strain L48)</name>
    <dbReference type="NCBI Taxonomy" id="384676"/>
    <lineage>
        <taxon>Bacteria</taxon>
        <taxon>Pseudomonadati</taxon>
        <taxon>Pseudomonadota</taxon>
        <taxon>Gammaproteobacteria</taxon>
        <taxon>Pseudomonadales</taxon>
        <taxon>Pseudomonadaceae</taxon>
        <taxon>Pseudomonas</taxon>
    </lineage>
</organism>